<sequence length="515" mass="59438">MSTIAAFYGGKSILITGATGFLGKVLMEKLFRTSPDLKVIYILVRPKAGQTLQQRVFQILDSKLFEKVKEVCPNVHEKIRAIYADLNQNDFAISKEDMQELLSCTNIIFHCAATVRFDDTLRHAVQLNVTATRQLLLMASQMPKLEAFIHISTAYSNCNLKHIDEVIYPCPVEPKKIIDSLEWLDDAIIDEITPKLIRDWPNIYTYTKALGEMVVQQESRNLNIAIIRPSIVGATWQEPFPGWVDNINGPNGIIIATGKGFLRAIKATPMAVADVIPVDTVVNLMLAVGWYTAVHRPKSTLVYHITSGNMNPCNWHKMGVQVLATFEKIPFERPFRRPNANFTSNSFTSQYWNAVSHRAPAIIYDCYLRLTGRKPRMTKLMNRLLRTVSMLEYFINRSWEWSTYNTEMLMSELSPEDQRVFNFDVRQLNWLEYIENYVLGVKKYLLKEDMAGIPKAKQRLKRLRNIHYLFNTALFLIAWRLLIARSQMARNVWFFIVSFCYKFLSYFRASSTLKV</sequence>
<gene>
    <name evidence="13" type="primary">FAR2</name>
    <name evidence="13" type="synonym">MLSTD1</name>
</gene>
<comment type="function">
    <text evidence="3 4 5">Catalyzes the reduction of saturated but not unsaturated C16 or C18 fatty acyl-CoA to fatty alcohols (FAls) (PubMed:15220348). A lower activity can be observed with shorter fatty acyl-CoA substrates (PubMed:15220348). Can produce very long-chain and ultra long-chain FAls, regardless of whether they have a straight or branched chain (PubMed:35238077). Involved in the production of ether lipids/plasmalogens and wax monoesters whose synthesis requires FAls as substrates (PubMed:24108123, PubMed:35238077).</text>
</comment>
<comment type="catalytic activity">
    <reaction evidence="3 5">
        <text>a long-chain fatty acyl-CoA + 2 NADPH + 2 H(+) = a long-chain primary fatty alcohol + 2 NADP(+) + CoA</text>
        <dbReference type="Rhea" id="RHEA:52716"/>
        <dbReference type="ChEBI" id="CHEBI:15378"/>
        <dbReference type="ChEBI" id="CHEBI:57287"/>
        <dbReference type="ChEBI" id="CHEBI:57783"/>
        <dbReference type="ChEBI" id="CHEBI:58349"/>
        <dbReference type="ChEBI" id="CHEBI:77396"/>
        <dbReference type="ChEBI" id="CHEBI:83139"/>
        <dbReference type="EC" id="1.2.1.84"/>
    </reaction>
    <physiologicalReaction direction="left-to-right" evidence="10 12">
        <dbReference type="Rhea" id="RHEA:52717"/>
    </physiologicalReaction>
</comment>
<comment type="catalytic activity">
    <reaction evidence="5">
        <text>a very long-chain fatty acyl-CoA + 2 NADPH + 2 H(+) = a very long-chain primary fatty alcohol + 2 NADP(+) + CoA</text>
        <dbReference type="Rhea" id="RHEA:81751"/>
        <dbReference type="ChEBI" id="CHEBI:15378"/>
        <dbReference type="ChEBI" id="CHEBI:57287"/>
        <dbReference type="ChEBI" id="CHEBI:57783"/>
        <dbReference type="ChEBI" id="CHEBI:58349"/>
        <dbReference type="ChEBI" id="CHEBI:138261"/>
        <dbReference type="ChEBI" id="CHEBI:138741"/>
    </reaction>
    <physiologicalReaction direction="left-to-right" evidence="12">
        <dbReference type="Rhea" id="RHEA:81752"/>
    </physiologicalReaction>
</comment>
<comment type="catalytic activity">
    <reaction evidence="5">
        <text>an ultra-long-chain fatty acyl-CoA + 2 NADPH + 2 H(+) = an ultra long-chain primary fatty alcohol + 2 NADP(+) + CoA</text>
        <dbReference type="Rhea" id="RHEA:81755"/>
        <dbReference type="ChEBI" id="CHEBI:15378"/>
        <dbReference type="ChEBI" id="CHEBI:57287"/>
        <dbReference type="ChEBI" id="CHEBI:57783"/>
        <dbReference type="ChEBI" id="CHEBI:58349"/>
        <dbReference type="ChEBI" id="CHEBI:143016"/>
        <dbReference type="ChEBI" id="CHEBI:143018"/>
    </reaction>
    <physiologicalReaction direction="left-to-right" evidence="12">
        <dbReference type="Rhea" id="RHEA:81756"/>
    </physiologicalReaction>
</comment>
<comment type="catalytic activity">
    <reaction evidence="3">
        <text>hexadecanoyl-CoA + 2 NADPH + 2 H(+) = hexadecan-1-ol + 2 NADP(+) + CoA</text>
        <dbReference type="Rhea" id="RHEA:36315"/>
        <dbReference type="ChEBI" id="CHEBI:15378"/>
        <dbReference type="ChEBI" id="CHEBI:16125"/>
        <dbReference type="ChEBI" id="CHEBI:57287"/>
        <dbReference type="ChEBI" id="CHEBI:57379"/>
        <dbReference type="ChEBI" id="CHEBI:57783"/>
        <dbReference type="ChEBI" id="CHEBI:58349"/>
        <dbReference type="EC" id="1.2.1.84"/>
    </reaction>
    <physiologicalReaction direction="left-to-right" evidence="10">
        <dbReference type="Rhea" id="RHEA:36316"/>
    </physiologicalReaction>
</comment>
<comment type="catalytic activity">
    <reaction evidence="1">
        <text>octadecanoyl-CoA + 2 NADPH + 2 H(+) = octadecan-1-ol + 2 NADP(+) + CoA</text>
        <dbReference type="Rhea" id="RHEA:36319"/>
        <dbReference type="ChEBI" id="CHEBI:15378"/>
        <dbReference type="ChEBI" id="CHEBI:32154"/>
        <dbReference type="ChEBI" id="CHEBI:57287"/>
        <dbReference type="ChEBI" id="CHEBI:57394"/>
        <dbReference type="ChEBI" id="CHEBI:57783"/>
        <dbReference type="ChEBI" id="CHEBI:58349"/>
        <dbReference type="EC" id="1.2.1.84"/>
    </reaction>
    <physiologicalReaction direction="left-to-right" evidence="1">
        <dbReference type="Rhea" id="RHEA:36320"/>
    </physiologicalReaction>
</comment>
<comment type="catalytic activity">
    <reaction evidence="5">
        <text>eicosanoyl-CoA + 2 NADPH + 2 H(+) = eicosan-1-ol + 2 NADP(+) + CoA</text>
        <dbReference type="Rhea" id="RHEA:81727"/>
        <dbReference type="ChEBI" id="CHEBI:15378"/>
        <dbReference type="ChEBI" id="CHEBI:57287"/>
        <dbReference type="ChEBI" id="CHEBI:57380"/>
        <dbReference type="ChEBI" id="CHEBI:57783"/>
        <dbReference type="ChEBI" id="CHEBI:58349"/>
        <dbReference type="ChEBI" id="CHEBI:75627"/>
    </reaction>
    <physiologicalReaction direction="left-to-right" evidence="12">
        <dbReference type="Rhea" id="RHEA:81728"/>
    </physiologicalReaction>
</comment>
<comment type="catalytic activity">
    <reaction evidence="5">
        <text>docosanoyl-CoA + 2 NADPH + 2 H(+) = docosan-1-ol + 2 NADP(+) + CoA</text>
        <dbReference type="Rhea" id="RHEA:81731"/>
        <dbReference type="ChEBI" id="CHEBI:15378"/>
        <dbReference type="ChEBI" id="CHEBI:31000"/>
        <dbReference type="ChEBI" id="CHEBI:57287"/>
        <dbReference type="ChEBI" id="CHEBI:57783"/>
        <dbReference type="ChEBI" id="CHEBI:58349"/>
        <dbReference type="ChEBI" id="CHEBI:65059"/>
    </reaction>
    <physiologicalReaction direction="left-to-right" evidence="12">
        <dbReference type="Rhea" id="RHEA:81732"/>
    </physiologicalReaction>
</comment>
<comment type="catalytic activity">
    <reaction evidence="5">
        <text>tetracosanoyl-CoA + 2 NADPH + 2 H(+) = tetracosan-1-ol + 2 NADP(+) + CoA</text>
        <dbReference type="Rhea" id="RHEA:81735"/>
        <dbReference type="ChEBI" id="CHEBI:15378"/>
        <dbReference type="ChEBI" id="CHEBI:57287"/>
        <dbReference type="ChEBI" id="CHEBI:57783"/>
        <dbReference type="ChEBI" id="CHEBI:58349"/>
        <dbReference type="ChEBI" id="CHEBI:65052"/>
        <dbReference type="ChEBI" id="CHEBI:77413"/>
    </reaction>
    <physiologicalReaction direction="left-to-right" evidence="12">
        <dbReference type="Rhea" id="RHEA:81736"/>
    </physiologicalReaction>
</comment>
<comment type="catalytic activity">
    <reaction evidence="5">
        <text>hexacosanoyl-CoA + 2 NADPH + 2 H(+) = hexacosan-1-ol + 2 NADP(+) + CoA</text>
        <dbReference type="Rhea" id="RHEA:81739"/>
        <dbReference type="ChEBI" id="CHEBI:15378"/>
        <dbReference type="ChEBI" id="CHEBI:28415"/>
        <dbReference type="ChEBI" id="CHEBI:57287"/>
        <dbReference type="ChEBI" id="CHEBI:57783"/>
        <dbReference type="ChEBI" id="CHEBI:58349"/>
        <dbReference type="ChEBI" id="CHEBI:64868"/>
    </reaction>
    <physiologicalReaction direction="left-to-right" evidence="12">
        <dbReference type="Rhea" id="RHEA:81740"/>
    </physiologicalReaction>
</comment>
<comment type="catalytic activity">
    <reaction evidence="5">
        <text>octacosanoyl-CoA + 2 NADPH + 2 H(+) = octacosan-1-ol + 2 NADP(+) + CoA</text>
        <dbReference type="Rhea" id="RHEA:81743"/>
        <dbReference type="ChEBI" id="CHEBI:15378"/>
        <dbReference type="ChEBI" id="CHEBI:28243"/>
        <dbReference type="ChEBI" id="CHEBI:57287"/>
        <dbReference type="ChEBI" id="CHEBI:57783"/>
        <dbReference type="ChEBI" id="CHEBI:58349"/>
        <dbReference type="ChEBI" id="CHEBI:74141"/>
    </reaction>
    <physiologicalReaction direction="left-to-right" evidence="12">
        <dbReference type="Rhea" id="RHEA:81744"/>
    </physiologicalReaction>
</comment>
<comment type="catalytic activity">
    <reaction evidence="5">
        <text>triacontanoyl-CoA + 2 NADPH + 2 H(+) = triacontan-1-ol + 2 NADP(+) + CoA</text>
        <dbReference type="Rhea" id="RHEA:81747"/>
        <dbReference type="ChEBI" id="CHEBI:15378"/>
        <dbReference type="ChEBI" id="CHEBI:28409"/>
        <dbReference type="ChEBI" id="CHEBI:57287"/>
        <dbReference type="ChEBI" id="CHEBI:57783"/>
        <dbReference type="ChEBI" id="CHEBI:58349"/>
        <dbReference type="ChEBI" id="CHEBI:76386"/>
    </reaction>
    <physiologicalReaction direction="left-to-right" evidence="12">
        <dbReference type="Rhea" id="RHEA:81748"/>
    </physiologicalReaction>
</comment>
<comment type="catalytic activity">
    <reaction evidence="5">
        <text>18-methylnonadecanoyl-CoA + 2 NADPH + 2 H(+) = 18-methylnonadecan-1-ol + 2 NADP(+) + CoA</text>
        <dbReference type="Rhea" id="RHEA:81767"/>
        <dbReference type="ChEBI" id="CHEBI:15378"/>
        <dbReference type="ChEBI" id="CHEBI:57287"/>
        <dbReference type="ChEBI" id="CHEBI:57783"/>
        <dbReference type="ChEBI" id="CHEBI:58349"/>
        <dbReference type="ChEBI" id="CHEBI:84914"/>
        <dbReference type="ChEBI" id="CHEBI:231999"/>
    </reaction>
    <physiologicalReaction direction="left-to-right" evidence="12">
        <dbReference type="Rhea" id="RHEA:81768"/>
    </physiologicalReaction>
</comment>
<comment type="catalytic activity">
    <reaction evidence="5">
        <text>20-methylheneicosanoyl-CoA + 2 NADPH + 2 H(+) = 20-methylheneicosan-1-ol + 2 NADP(+) + CoA</text>
        <dbReference type="Rhea" id="RHEA:81771"/>
        <dbReference type="ChEBI" id="CHEBI:15378"/>
        <dbReference type="ChEBI" id="CHEBI:57287"/>
        <dbReference type="ChEBI" id="CHEBI:57783"/>
        <dbReference type="ChEBI" id="CHEBI:58349"/>
        <dbReference type="ChEBI" id="CHEBI:84915"/>
        <dbReference type="ChEBI" id="CHEBI:232000"/>
    </reaction>
    <physiologicalReaction direction="left-to-right" evidence="12">
        <dbReference type="Rhea" id="RHEA:81772"/>
    </physiologicalReaction>
</comment>
<comment type="catalytic activity">
    <reaction evidence="5">
        <text>22-methyltricosanoyl-CoA + 2 NADPH + 2 H(+) = 22-methyltricosan-1-ol + 2 NADP(+) + CoA</text>
        <dbReference type="Rhea" id="RHEA:81775"/>
        <dbReference type="ChEBI" id="CHEBI:15378"/>
        <dbReference type="ChEBI" id="CHEBI:57287"/>
        <dbReference type="ChEBI" id="CHEBI:57783"/>
        <dbReference type="ChEBI" id="CHEBI:58349"/>
        <dbReference type="ChEBI" id="CHEBI:84916"/>
        <dbReference type="ChEBI" id="CHEBI:232001"/>
    </reaction>
    <physiologicalReaction direction="left-to-right" evidence="12">
        <dbReference type="Rhea" id="RHEA:81776"/>
    </physiologicalReaction>
</comment>
<comment type="catalytic activity">
    <reaction evidence="5">
        <text>24-methylpentacosanoyl-CoA + 2 NADPH + 2 H(+) = 24-methylpentacosan-1-ol + 2 NADP(+) + CoA</text>
        <dbReference type="Rhea" id="RHEA:81779"/>
        <dbReference type="ChEBI" id="CHEBI:15378"/>
        <dbReference type="ChEBI" id="CHEBI:57287"/>
        <dbReference type="ChEBI" id="CHEBI:57783"/>
        <dbReference type="ChEBI" id="CHEBI:58349"/>
        <dbReference type="ChEBI" id="CHEBI:84917"/>
        <dbReference type="ChEBI" id="CHEBI:232002"/>
    </reaction>
    <physiologicalReaction direction="left-to-right" evidence="12">
        <dbReference type="Rhea" id="RHEA:81780"/>
    </physiologicalReaction>
</comment>
<comment type="subcellular location">
    <subcellularLocation>
        <location evidence="3 4">Peroxisome membrane</location>
        <topology evidence="11">Single-pass membrane protein</topology>
    </subcellularLocation>
</comment>
<comment type="alternative products">
    <event type="alternative splicing"/>
    <isoform>
        <id>Q96K12-1</id>
        <name>1</name>
        <sequence type="displayed"/>
    </isoform>
    <isoform>
        <id>Q96K12-2</id>
        <name>2</name>
        <sequence type="described" ref="VSP_055648"/>
    </isoform>
</comment>
<comment type="similarity">
    <text evidence="9">Belongs to the fatty acyl-CoA reductase family.</text>
</comment>
<organism>
    <name type="scientific">Homo sapiens</name>
    <name type="common">Human</name>
    <dbReference type="NCBI Taxonomy" id="9606"/>
    <lineage>
        <taxon>Eukaryota</taxon>
        <taxon>Metazoa</taxon>
        <taxon>Chordata</taxon>
        <taxon>Craniata</taxon>
        <taxon>Vertebrata</taxon>
        <taxon>Euteleostomi</taxon>
        <taxon>Mammalia</taxon>
        <taxon>Eutheria</taxon>
        <taxon>Euarchontoglires</taxon>
        <taxon>Primates</taxon>
        <taxon>Haplorrhini</taxon>
        <taxon>Catarrhini</taxon>
        <taxon>Hominidae</taxon>
        <taxon>Homo</taxon>
    </lineage>
</organism>
<accession>Q96K12</accession>
<accession>F8VV73</accession>
<accession>Q9H0D5</accession>
<accession>Q9NVW8</accession>
<protein>
    <recommendedName>
        <fullName evidence="7 8">Fatty acyl-CoA reductase 2</fullName>
        <shortName evidence="8">FAR2</shortName>
        <ecNumber evidence="3">1.2.1.84</ecNumber>
    </recommendedName>
    <alternativeName>
        <fullName evidence="13">Male sterility domain-containing protein 1</fullName>
    </alternativeName>
</protein>
<keyword id="KW-0025">Alternative splicing</keyword>
<keyword id="KW-0444">Lipid biosynthesis</keyword>
<keyword id="KW-0443">Lipid metabolism</keyword>
<keyword id="KW-0472">Membrane</keyword>
<keyword id="KW-0521">NADP</keyword>
<keyword id="KW-0560">Oxidoreductase</keyword>
<keyword id="KW-0576">Peroxisome</keyword>
<keyword id="KW-1267">Proteomics identification</keyword>
<keyword id="KW-1185">Reference proteome</keyword>
<keyword id="KW-0812">Transmembrane</keyword>
<keyword id="KW-1133">Transmembrane helix</keyword>
<dbReference type="EC" id="1.2.1.84" evidence="3"/>
<dbReference type="EMBL" id="AL136843">
    <property type="protein sequence ID" value="CAB66777.1"/>
    <property type="molecule type" value="mRNA"/>
</dbReference>
<dbReference type="EMBL" id="AK001324">
    <property type="protein sequence ID" value="BAA91625.1"/>
    <property type="molecule type" value="mRNA"/>
</dbReference>
<dbReference type="EMBL" id="AK027756">
    <property type="protein sequence ID" value="BAB55347.1"/>
    <property type="molecule type" value="mRNA"/>
</dbReference>
<dbReference type="EMBL" id="AK129857">
    <property type="status" value="NOT_ANNOTATED_CDS"/>
    <property type="molecule type" value="mRNA"/>
</dbReference>
<dbReference type="EMBL" id="AC009318">
    <property type="status" value="NOT_ANNOTATED_CDS"/>
    <property type="molecule type" value="Genomic_DNA"/>
</dbReference>
<dbReference type="EMBL" id="AC012150">
    <property type="status" value="NOT_ANNOTATED_CDS"/>
    <property type="molecule type" value="Genomic_DNA"/>
</dbReference>
<dbReference type="EMBL" id="BC022267">
    <property type="protein sequence ID" value="AAH22267.1"/>
    <property type="molecule type" value="mRNA"/>
</dbReference>
<dbReference type="CCDS" id="CCDS61084.1">
    <molecule id="Q96K12-2"/>
</dbReference>
<dbReference type="CCDS" id="CCDS8717.1">
    <molecule id="Q96K12-1"/>
</dbReference>
<dbReference type="RefSeq" id="NP_001258712.1">
    <molecule id="Q96K12-1"/>
    <property type="nucleotide sequence ID" value="NM_001271783.2"/>
</dbReference>
<dbReference type="RefSeq" id="NP_001258713.1">
    <molecule id="Q96K12-2"/>
    <property type="nucleotide sequence ID" value="NM_001271784.2"/>
</dbReference>
<dbReference type="RefSeq" id="NP_060569.3">
    <molecule id="Q96K12-1"/>
    <property type="nucleotide sequence ID" value="NM_018099.4"/>
</dbReference>
<dbReference type="SMR" id="Q96K12"/>
<dbReference type="BioGRID" id="120834">
    <property type="interactions" value="48"/>
</dbReference>
<dbReference type="FunCoup" id="Q96K12">
    <property type="interactions" value="277"/>
</dbReference>
<dbReference type="IntAct" id="Q96K12">
    <property type="interactions" value="37"/>
</dbReference>
<dbReference type="STRING" id="9606.ENSP00000443291"/>
<dbReference type="SwissLipids" id="SLP:000000209"/>
<dbReference type="iPTMnet" id="Q96K12"/>
<dbReference type="PhosphoSitePlus" id="Q96K12"/>
<dbReference type="BioMuta" id="FAR2"/>
<dbReference type="DMDM" id="74732166"/>
<dbReference type="jPOST" id="Q96K12"/>
<dbReference type="MassIVE" id="Q96K12"/>
<dbReference type="PaxDb" id="9606-ENSP00000443291"/>
<dbReference type="PeptideAtlas" id="Q96K12"/>
<dbReference type="ProteomicsDB" id="28799"/>
<dbReference type="ProteomicsDB" id="77023">
    <molecule id="Q96K12-1"/>
</dbReference>
<dbReference type="Pumba" id="Q96K12"/>
<dbReference type="Antibodypedia" id="2982">
    <property type="antibodies" value="76 antibodies from 19 providers"/>
</dbReference>
<dbReference type="DNASU" id="55711"/>
<dbReference type="Ensembl" id="ENST00000182377.8">
    <molecule id="Q96K12-1"/>
    <property type="protein sequence ID" value="ENSP00000182377.4"/>
    <property type="gene ID" value="ENSG00000064763.12"/>
</dbReference>
<dbReference type="Ensembl" id="ENST00000536681.8">
    <molecule id="Q96K12-1"/>
    <property type="protein sequence ID" value="ENSP00000443291.2"/>
    <property type="gene ID" value="ENSG00000064763.12"/>
</dbReference>
<dbReference type="Ensembl" id="ENST00000547116.5">
    <molecule id="Q96K12-2"/>
    <property type="protein sequence ID" value="ENSP00000449349.1"/>
    <property type="gene ID" value="ENSG00000064763.12"/>
</dbReference>
<dbReference type="Ensembl" id="ENST00000690162.1">
    <molecule id="Q96K12-2"/>
    <property type="protein sequence ID" value="ENSP00000510233.1"/>
    <property type="gene ID" value="ENSG00000064763.12"/>
</dbReference>
<dbReference type="GeneID" id="55711"/>
<dbReference type="KEGG" id="hsa:55711"/>
<dbReference type="MANE-Select" id="ENST00000536681.8">
    <property type="protein sequence ID" value="ENSP00000443291.2"/>
    <property type="RefSeq nucleotide sequence ID" value="NM_001271783.2"/>
    <property type="RefSeq protein sequence ID" value="NP_001258712.1"/>
</dbReference>
<dbReference type="UCSC" id="uc001ris.6">
    <molecule id="Q96K12-1"/>
    <property type="organism name" value="human"/>
</dbReference>
<dbReference type="AGR" id="HGNC:25531"/>
<dbReference type="CTD" id="55711"/>
<dbReference type="DisGeNET" id="55711"/>
<dbReference type="GeneCards" id="FAR2"/>
<dbReference type="HGNC" id="HGNC:25531">
    <property type="gene designation" value="FAR2"/>
</dbReference>
<dbReference type="HPA" id="ENSG00000064763">
    <property type="expression patterns" value="Tissue enhanced (intestine)"/>
</dbReference>
<dbReference type="MIM" id="616156">
    <property type="type" value="gene"/>
</dbReference>
<dbReference type="neXtProt" id="NX_Q96K12"/>
<dbReference type="OpenTargets" id="ENSG00000064763"/>
<dbReference type="PharmGKB" id="PA162388036"/>
<dbReference type="VEuPathDB" id="HostDB:ENSG00000064763"/>
<dbReference type="eggNOG" id="KOG1221">
    <property type="taxonomic scope" value="Eukaryota"/>
</dbReference>
<dbReference type="GeneTree" id="ENSGT00390000006367"/>
<dbReference type="HOGENOM" id="CLU_024661_0_0_1"/>
<dbReference type="InParanoid" id="Q96K12"/>
<dbReference type="OMA" id="WRFFIAR"/>
<dbReference type="OrthoDB" id="429813at2759"/>
<dbReference type="PAN-GO" id="Q96K12">
    <property type="GO annotations" value="3 GO annotations based on evolutionary models"/>
</dbReference>
<dbReference type="PhylomeDB" id="Q96K12"/>
<dbReference type="TreeFam" id="TF313011"/>
<dbReference type="PathwayCommons" id="Q96K12"/>
<dbReference type="Reactome" id="R-HSA-9640463">
    <property type="pathway name" value="Wax biosynthesis"/>
</dbReference>
<dbReference type="SignaLink" id="Q96K12"/>
<dbReference type="BioGRID-ORCS" id="55711">
    <property type="hits" value="164 hits in 1163 CRISPR screens"/>
</dbReference>
<dbReference type="ChiTaRS" id="FAR2">
    <property type="organism name" value="human"/>
</dbReference>
<dbReference type="GenomeRNAi" id="55711"/>
<dbReference type="Pharos" id="Q96K12">
    <property type="development level" value="Tbio"/>
</dbReference>
<dbReference type="PRO" id="PR:Q96K12"/>
<dbReference type="Proteomes" id="UP000005640">
    <property type="component" value="Chromosome 12"/>
</dbReference>
<dbReference type="RNAct" id="Q96K12">
    <property type="molecule type" value="protein"/>
</dbReference>
<dbReference type="Bgee" id="ENSG00000064763">
    <property type="expression patterns" value="Expressed in upper leg skin and 149 other cell types or tissues"/>
</dbReference>
<dbReference type="ExpressionAtlas" id="Q96K12">
    <property type="expression patterns" value="baseline and differential"/>
</dbReference>
<dbReference type="GO" id="GO:0005778">
    <property type="term" value="C:peroxisomal membrane"/>
    <property type="evidence" value="ECO:0000314"/>
    <property type="project" value="UniProtKB"/>
</dbReference>
<dbReference type="GO" id="GO:0005777">
    <property type="term" value="C:peroxisome"/>
    <property type="evidence" value="ECO:0000250"/>
    <property type="project" value="UniProtKB"/>
</dbReference>
<dbReference type="GO" id="GO:0102965">
    <property type="term" value="F:alcohol-forming long-chain fatty acyl-CoA reductase activity"/>
    <property type="evidence" value="ECO:0007669"/>
    <property type="project" value="UniProtKB-EC"/>
</dbReference>
<dbReference type="GO" id="GO:0080019">
    <property type="term" value="F:alcohol-forming very long-chain fatty acyl-CoA reductase activity"/>
    <property type="evidence" value="ECO:0000314"/>
    <property type="project" value="UniProtKB"/>
</dbReference>
<dbReference type="GO" id="GO:0016491">
    <property type="term" value="F:oxidoreductase activity"/>
    <property type="evidence" value="ECO:0000304"/>
    <property type="project" value="Reactome"/>
</dbReference>
<dbReference type="GO" id="GO:0035336">
    <property type="term" value="P:long-chain fatty-acyl-CoA metabolic process"/>
    <property type="evidence" value="ECO:0000314"/>
    <property type="project" value="UniProtKB"/>
</dbReference>
<dbReference type="GO" id="GO:0010025">
    <property type="term" value="P:wax biosynthetic process"/>
    <property type="evidence" value="ECO:0000304"/>
    <property type="project" value="Reactome"/>
</dbReference>
<dbReference type="CDD" id="cd05236">
    <property type="entry name" value="FAR-N_SDR_e"/>
    <property type="match status" value="1"/>
</dbReference>
<dbReference type="CDD" id="cd09071">
    <property type="entry name" value="FAR_C"/>
    <property type="match status" value="1"/>
</dbReference>
<dbReference type="FunFam" id="3.40.50.720:FF:000278">
    <property type="entry name" value="Fatty acyl-CoA reductase"/>
    <property type="match status" value="1"/>
</dbReference>
<dbReference type="Gene3D" id="3.40.50.720">
    <property type="entry name" value="NAD(P)-binding Rossmann-like Domain"/>
    <property type="match status" value="1"/>
</dbReference>
<dbReference type="InterPro" id="IPR026055">
    <property type="entry name" value="FAR"/>
</dbReference>
<dbReference type="InterPro" id="IPR033640">
    <property type="entry name" value="FAR_C"/>
</dbReference>
<dbReference type="InterPro" id="IPR013120">
    <property type="entry name" value="Far_NAD-bd"/>
</dbReference>
<dbReference type="InterPro" id="IPR036291">
    <property type="entry name" value="NAD(P)-bd_dom_sf"/>
</dbReference>
<dbReference type="PANTHER" id="PTHR11011:SF120">
    <property type="entry name" value="FATTY ACYL-COA REDUCTASE 2"/>
    <property type="match status" value="1"/>
</dbReference>
<dbReference type="PANTHER" id="PTHR11011">
    <property type="entry name" value="MALE STERILITY PROTEIN 2-RELATED"/>
    <property type="match status" value="1"/>
</dbReference>
<dbReference type="Pfam" id="PF07993">
    <property type="entry name" value="NAD_binding_4"/>
    <property type="match status" value="1"/>
</dbReference>
<dbReference type="Pfam" id="PF03015">
    <property type="entry name" value="Sterile"/>
    <property type="match status" value="1"/>
</dbReference>
<dbReference type="SUPFAM" id="SSF51735">
    <property type="entry name" value="NAD(P)-binding Rossmann-fold domains"/>
    <property type="match status" value="1"/>
</dbReference>
<feature type="chain" id="PRO_0000261401" description="Fatty acyl-CoA reductase 2">
    <location>
        <begin position="1"/>
        <end position="515"/>
    </location>
</feature>
<feature type="topological domain" description="Cytoplasmic" evidence="4">
    <location>
        <begin position="1"/>
        <end position="464"/>
    </location>
</feature>
<feature type="transmembrane region" description="Helical" evidence="2">
    <location>
        <begin position="465"/>
        <end position="484"/>
    </location>
</feature>
<feature type="topological domain" description="Peroxisomal" evidence="4">
    <location>
        <begin position="485"/>
        <end position="515"/>
    </location>
</feature>
<feature type="splice variant" id="VSP_055648" description="In isoform 2." evidence="6">
    <location>
        <begin position="1"/>
        <end position="97"/>
    </location>
</feature>
<feature type="sequence conflict" description="In Ref. 1; CAB66777." evidence="9" ref="1">
    <original>T</original>
    <variation>A</variation>
    <location>
        <position position="51"/>
    </location>
</feature>
<feature type="sequence conflict" description="In Ref. 2; BAA91625." evidence="9" ref="2">
    <original>I</original>
    <variation>T</variation>
    <location>
        <position position="167"/>
    </location>
</feature>
<reference key="1">
    <citation type="journal article" date="2001" name="Genome Res.">
        <title>Towards a catalog of human genes and proteins: sequencing and analysis of 500 novel complete protein coding human cDNAs.</title>
        <authorList>
            <person name="Wiemann S."/>
            <person name="Weil B."/>
            <person name="Wellenreuther R."/>
            <person name="Gassenhuber J."/>
            <person name="Glassl S."/>
            <person name="Ansorge W."/>
            <person name="Boecher M."/>
            <person name="Bloecker H."/>
            <person name="Bauersachs S."/>
            <person name="Blum H."/>
            <person name="Lauber J."/>
            <person name="Duesterhoeft A."/>
            <person name="Beyer A."/>
            <person name="Koehrer K."/>
            <person name="Strack N."/>
            <person name="Mewes H.-W."/>
            <person name="Ottenwaelder B."/>
            <person name="Obermaier B."/>
            <person name="Tampe J."/>
            <person name="Heubner D."/>
            <person name="Wambutt R."/>
            <person name="Korn B."/>
            <person name="Klein M."/>
            <person name="Poustka A."/>
        </authorList>
    </citation>
    <scope>NUCLEOTIDE SEQUENCE [LARGE SCALE MRNA] (ISOFORM 1)</scope>
    <source>
        <tissue>Testis</tissue>
    </source>
</reference>
<reference key="2">
    <citation type="journal article" date="2004" name="Nat. Genet.">
        <title>Complete sequencing and characterization of 21,243 full-length human cDNAs.</title>
        <authorList>
            <person name="Ota T."/>
            <person name="Suzuki Y."/>
            <person name="Nishikawa T."/>
            <person name="Otsuki T."/>
            <person name="Sugiyama T."/>
            <person name="Irie R."/>
            <person name="Wakamatsu A."/>
            <person name="Hayashi K."/>
            <person name="Sato H."/>
            <person name="Nagai K."/>
            <person name="Kimura K."/>
            <person name="Makita H."/>
            <person name="Sekine M."/>
            <person name="Obayashi M."/>
            <person name="Nishi T."/>
            <person name="Shibahara T."/>
            <person name="Tanaka T."/>
            <person name="Ishii S."/>
            <person name="Yamamoto J."/>
            <person name="Saito K."/>
            <person name="Kawai Y."/>
            <person name="Isono Y."/>
            <person name="Nakamura Y."/>
            <person name="Nagahari K."/>
            <person name="Murakami K."/>
            <person name="Yasuda T."/>
            <person name="Iwayanagi T."/>
            <person name="Wagatsuma M."/>
            <person name="Shiratori A."/>
            <person name="Sudo H."/>
            <person name="Hosoiri T."/>
            <person name="Kaku Y."/>
            <person name="Kodaira H."/>
            <person name="Kondo H."/>
            <person name="Sugawara M."/>
            <person name="Takahashi M."/>
            <person name="Kanda K."/>
            <person name="Yokoi T."/>
            <person name="Furuya T."/>
            <person name="Kikkawa E."/>
            <person name="Omura Y."/>
            <person name="Abe K."/>
            <person name="Kamihara K."/>
            <person name="Katsuta N."/>
            <person name="Sato K."/>
            <person name="Tanikawa M."/>
            <person name="Yamazaki M."/>
            <person name="Ninomiya K."/>
            <person name="Ishibashi T."/>
            <person name="Yamashita H."/>
            <person name="Murakawa K."/>
            <person name="Fujimori K."/>
            <person name="Tanai H."/>
            <person name="Kimata M."/>
            <person name="Watanabe M."/>
            <person name="Hiraoka S."/>
            <person name="Chiba Y."/>
            <person name="Ishida S."/>
            <person name="Ono Y."/>
            <person name="Takiguchi S."/>
            <person name="Watanabe S."/>
            <person name="Yosida M."/>
            <person name="Hotuta T."/>
            <person name="Kusano J."/>
            <person name="Kanehori K."/>
            <person name="Takahashi-Fujii A."/>
            <person name="Hara H."/>
            <person name="Tanase T.-O."/>
            <person name="Nomura Y."/>
            <person name="Togiya S."/>
            <person name="Komai F."/>
            <person name="Hara R."/>
            <person name="Takeuchi K."/>
            <person name="Arita M."/>
            <person name="Imose N."/>
            <person name="Musashino K."/>
            <person name="Yuuki H."/>
            <person name="Oshima A."/>
            <person name="Sasaki N."/>
            <person name="Aotsuka S."/>
            <person name="Yoshikawa Y."/>
            <person name="Matsunawa H."/>
            <person name="Ichihara T."/>
            <person name="Shiohata N."/>
            <person name="Sano S."/>
            <person name="Moriya S."/>
            <person name="Momiyama H."/>
            <person name="Satoh N."/>
            <person name="Takami S."/>
            <person name="Terashima Y."/>
            <person name="Suzuki O."/>
            <person name="Nakagawa S."/>
            <person name="Senoh A."/>
            <person name="Mizoguchi H."/>
            <person name="Goto Y."/>
            <person name="Shimizu F."/>
            <person name="Wakebe H."/>
            <person name="Hishigaki H."/>
            <person name="Watanabe T."/>
            <person name="Sugiyama A."/>
            <person name="Takemoto M."/>
            <person name="Kawakami B."/>
            <person name="Yamazaki M."/>
            <person name="Watanabe K."/>
            <person name="Kumagai A."/>
            <person name="Itakura S."/>
            <person name="Fukuzumi Y."/>
            <person name="Fujimori Y."/>
            <person name="Komiyama M."/>
            <person name="Tashiro H."/>
            <person name="Tanigami A."/>
            <person name="Fujiwara T."/>
            <person name="Ono T."/>
            <person name="Yamada K."/>
            <person name="Fujii Y."/>
            <person name="Ozaki K."/>
            <person name="Hirao M."/>
            <person name="Ohmori Y."/>
            <person name="Kawabata A."/>
            <person name="Hikiji T."/>
            <person name="Kobatake N."/>
            <person name="Inagaki H."/>
            <person name="Ikema Y."/>
            <person name="Okamoto S."/>
            <person name="Okitani R."/>
            <person name="Kawakami T."/>
            <person name="Noguchi S."/>
            <person name="Itoh T."/>
            <person name="Shigeta K."/>
            <person name="Senba T."/>
            <person name="Matsumura K."/>
            <person name="Nakajima Y."/>
            <person name="Mizuno T."/>
            <person name="Morinaga M."/>
            <person name="Sasaki M."/>
            <person name="Togashi T."/>
            <person name="Oyama M."/>
            <person name="Hata H."/>
            <person name="Watanabe M."/>
            <person name="Komatsu T."/>
            <person name="Mizushima-Sugano J."/>
            <person name="Satoh T."/>
            <person name="Shirai Y."/>
            <person name="Takahashi Y."/>
            <person name="Nakagawa K."/>
            <person name="Okumura K."/>
            <person name="Nagase T."/>
            <person name="Nomura N."/>
            <person name="Kikuchi H."/>
            <person name="Masuho Y."/>
            <person name="Yamashita R."/>
            <person name="Nakai K."/>
            <person name="Yada T."/>
            <person name="Nakamura Y."/>
            <person name="Ohara O."/>
            <person name="Isogai T."/>
            <person name="Sugano S."/>
        </authorList>
    </citation>
    <scope>NUCLEOTIDE SEQUENCE [LARGE SCALE MRNA] (ISOFORMS 1 AND 2)</scope>
    <source>
        <tissue>Heart</tissue>
        <tissue>Placenta</tissue>
        <tissue>Teratocarcinoma</tissue>
    </source>
</reference>
<reference key="3">
    <citation type="journal article" date="2006" name="Nature">
        <title>The finished DNA sequence of human chromosome 12.</title>
        <authorList>
            <person name="Scherer S.E."/>
            <person name="Muzny D.M."/>
            <person name="Buhay C.J."/>
            <person name="Chen R."/>
            <person name="Cree A."/>
            <person name="Ding Y."/>
            <person name="Dugan-Rocha S."/>
            <person name="Gill R."/>
            <person name="Gunaratne P."/>
            <person name="Harris R.A."/>
            <person name="Hawes A.C."/>
            <person name="Hernandez J."/>
            <person name="Hodgson A.V."/>
            <person name="Hume J."/>
            <person name="Jackson A."/>
            <person name="Khan Z.M."/>
            <person name="Kovar-Smith C."/>
            <person name="Lewis L.R."/>
            <person name="Lozado R.J."/>
            <person name="Metzker M.L."/>
            <person name="Milosavljevic A."/>
            <person name="Miner G.R."/>
            <person name="Montgomery K.T."/>
            <person name="Morgan M.B."/>
            <person name="Nazareth L.V."/>
            <person name="Scott G."/>
            <person name="Sodergren E."/>
            <person name="Song X.-Z."/>
            <person name="Steffen D."/>
            <person name="Lovering R.C."/>
            <person name="Wheeler D.A."/>
            <person name="Worley K.C."/>
            <person name="Yuan Y."/>
            <person name="Zhang Z."/>
            <person name="Adams C.Q."/>
            <person name="Ansari-Lari M.A."/>
            <person name="Ayele M."/>
            <person name="Brown M.J."/>
            <person name="Chen G."/>
            <person name="Chen Z."/>
            <person name="Clerc-Blankenburg K.P."/>
            <person name="Davis C."/>
            <person name="Delgado O."/>
            <person name="Dinh H.H."/>
            <person name="Draper H."/>
            <person name="Gonzalez-Garay M.L."/>
            <person name="Havlak P."/>
            <person name="Jackson L.R."/>
            <person name="Jacob L.S."/>
            <person name="Kelly S.H."/>
            <person name="Li L."/>
            <person name="Li Z."/>
            <person name="Liu J."/>
            <person name="Liu W."/>
            <person name="Lu J."/>
            <person name="Maheshwari M."/>
            <person name="Nguyen B.-V."/>
            <person name="Okwuonu G.O."/>
            <person name="Pasternak S."/>
            <person name="Perez L.M."/>
            <person name="Plopper F.J.H."/>
            <person name="Santibanez J."/>
            <person name="Shen H."/>
            <person name="Tabor P.E."/>
            <person name="Verduzco D."/>
            <person name="Waldron L."/>
            <person name="Wang Q."/>
            <person name="Williams G.A."/>
            <person name="Zhang J."/>
            <person name="Zhou J."/>
            <person name="Allen C.C."/>
            <person name="Amin A.G."/>
            <person name="Anyalebechi V."/>
            <person name="Bailey M."/>
            <person name="Barbaria J.A."/>
            <person name="Bimage K.E."/>
            <person name="Bryant N.P."/>
            <person name="Burch P.E."/>
            <person name="Burkett C.E."/>
            <person name="Burrell K.L."/>
            <person name="Calderon E."/>
            <person name="Cardenas V."/>
            <person name="Carter K."/>
            <person name="Casias K."/>
            <person name="Cavazos I."/>
            <person name="Cavazos S.R."/>
            <person name="Ceasar H."/>
            <person name="Chacko J."/>
            <person name="Chan S.N."/>
            <person name="Chavez D."/>
            <person name="Christopoulos C."/>
            <person name="Chu J."/>
            <person name="Cockrell R."/>
            <person name="Cox C.D."/>
            <person name="Dang M."/>
            <person name="Dathorne S.R."/>
            <person name="David R."/>
            <person name="Davis C.M."/>
            <person name="Davy-Carroll L."/>
            <person name="Deshazo D.R."/>
            <person name="Donlin J.E."/>
            <person name="D'Souza L."/>
            <person name="Eaves K.A."/>
            <person name="Egan A."/>
            <person name="Emery-Cohen A.J."/>
            <person name="Escotto M."/>
            <person name="Flagg N."/>
            <person name="Forbes L.D."/>
            <person name="Gabisi A.M."/>
            <person name="Garza M."/>
            <person name="Hamilton C."/>
            <person name="Henderson N."/>
            <person name="Hernandez O."/>
            <person name="Hines S."/>
            <person name="Hogues M.E."/>
            <person name="Huang M."/>
            <person name="Idlebird D.G."/>
            <person name="Johnson R."/>
            <person name="Jolivet A."/>
            <person name="Jones S."/>
            <person name="Kagan R."/>
            <person name="King L.M."/>
            <person name="Leal B."/>
            <person name="Lebow H."/>
            <person name="Lee S."/>
            <person name="LeVan J.M."/>
            <person name="Lewis L.C."/>
            <person name="London P."/>
            <person name="Lorensuhewa L.M."/>
            <person name="Loulseged H."/>
            <person name="Lovett D.A."/>
            <person name="Lucier A."/>
            <person name="Lucier R.L."/>
            <person name="Ma J."/>
            <person name="Madu R.C."/>
            <person name="Mapua P."/>
            <person name="Martindale A.D."/>
            <person name="Martinez E."/>
            <person name="Massey E."/>
            <person name="Mawhiney S."/>
            <person name="Meador M.G."/>
            <person name="Mendez S."/>
            <person name="Mercado C."/>
            <person name="Mercado I.C."/>
            <person name="Merritt C.E."/>
            <person name="Miner Z.L."/>
            <person name="Minja E."/>
            <person name="Mitchell T."/>
            <person name="Mohabbat F."/>
            <person name="Mohabbat K."/>
            <person name="Montgomery B."/>
            <person name="Moore N."/>
            <person name="Morris S."/>
            <person name="Munidasa M."/>
            <person name="Ngo R.N."/>
            <person name="Nguyen N.B."/>
            <person name="Nickerson E."/>
            <person name="Nwaokelemeh O.O."/>
            <person name="Nwokenkwo S."/>
            <person name="Obregon M."/>
            <person name="Oguh M."/>
            <person name="Oragunye N."/>
            <person name="Oviedo R.J."/>
            <person name="Parish B.J."/>
            <person name="Parker D.N."/>
            <person name="Parrish J."/>
            <person name="Parks K.L."/>
            <person name="Paul H.A."/>
            <person name="Payton B.A."/>
            <person name="Perez A."/>
            <person name="Perrin W."/>
            <person name="Pickens A."/>
            <person name="Primus E.L."/>
            <person name="Pu L.-L."/>
            <person name="Puazo M."/>
            <person name="Quiles M.M."/>
            <person name="Quiroz J.B."/>
            <person name="Rabata D."/>
            <person name="Reeves K."/>
            <person name="Ruiz S.J."/>
            <person name="Shao H."/>
            <person name="Sisson I."/>
            <person name="Sonaike T."/>
            <person name="Sorelle R.P."/>
            <person name="Sutton A.E."/>
            <person name="Svatek A.F."/>
            <person name="Svetz L.A."/>
            <person name="Tamerisa K.S."/>
            <person name="Taylor T.R."/>
            <person name="Teague B."/>
            <person name="Thomas N."/>
            <person name="Thorn R.D."/>
            <person name="Trejos Z.Y."/>
            <person name="Trevino B.K."/>
            <person name="Ukegbu O.N."/>
            <person name="Urban J.B."/>
            <person name="Vasquez L.I."/>
            <person name="Vera V.A."/>
            <person name="Villasana D.M."/>
            <person name="Wang L."/>
            <person name="Ward-Moore S."/>
            <person name="Warren J.T."/>
            <person name="Wei X."/>
            <person name="White F."/>
            <person name="Williamson A.L."/>
            <person name="Wleczyk R."/>
            <person name="Wooden H.S."/>
            <person name="Wooden S.H."/>
            <person name="Yen J."/>
            <person name="Yoon L."/>
            <person name="Yoon V."/>
            <person name="Zorrilla S.E."/>
            <person name="Nelson D."/>
            <person name="Kucherlapati R."/>
            <person name="Weinstock G."/>
            <person name="Gibbs R.A."/>
        </authorList>
    </citation>
    <scope>NUCLEOTIDE SEQUENCE [LARGE SCALE GENOMIC DNA]</scope>
</reference>
<reference key="4">
    <citation type="journal article" date="2004" name="Genome Res.">
        <title>The status, quality, and expansion of the NIH full-length cDNA project: the Mammalian Gene Collection (MGC).</title>
        <authorList>
            <consortium name="The MGC Project Team"/>
        </authorList>
    </citation>
    <scope>NUCLEOTIDE SEQUENCE [LARGE SCALE MRNA] (ISOFORM 1)</scope>
    <source>
        <tissue>Placenta</tissue>
    </source>
</reference>
<reference key="5">
    <citation type="journal article" date="2004" name="J. Biol. Chem.">
        <title>Mammalian wax biosynthesis: I. Identification of two fatty acyl-coenzyme A reductases with different substrate specificities and tissue distributions.</title>
        <authorList>
            <person name="Cheng J.B."/>
            <person name="Russell D.W."/>
        </authorList>
    </citation>
    <scope>FUNCTION</scope>
    <scope>CATALYTIC ACTIVITY</scope>
    <scope>SUBCELLULAR LOCATION</scope>
</reference>
<reference key="6">
    <citation type="journal article" date="2013" name="J. Biol. Chem.">
        <title>Topogenesis and homeostasis of fatty acyl-CoA reductase 1.</title>
        <authorList>
            <person name="Honsho M."/>
            <person name="Asaoku S."/>
            <person name="Fukumoto K."/>
            <person name="Fujiki Y."/>
        </authorList>
    </citation>
    <scope>SUBCELLULAR LOCATION</scope>
    <scope>TOPOLOGY</scope>
    <scope>FUNCTION</scope>
</reference>
<reference key="7">
    <citation type="journal article" date="2022" name="FASEB J.">
        <title>Formation of fatty alcohols-components of meibum lipids-by the fatty acyl-CoA reductase FAR2 is essential for dry eye prevention.</title>
        <authorList>
            <person name="Otsuka K."/>
            <person name="Sawai-Ogawa M."/>
            <person name="Kihara A."/>
        </authorList>
    </citation>
    <scope>FUNCTION</scope>
    <scope>CATALYTIC ACTIVITY</scope>
</reference>
<proteinExistence type="evidence at protein level"/>
<evidence type="ECO:0000250" key="1">
    <source>
        <dbReference type="UniProtKB" id="Q7TNT2"/>
    </source>
</evidence>
<evidence type="ECO:0000255" key="2"/>
<evidence type="ECO:0000269" key="3">
    <source>
    </source>
</evidence>
<evidence type="ECO:0000269" key="4">
    <source>
    </source>
</evidence>
<evidence type="ECO:0000269" key="5">
    <source>
    </source>
</evidence>
<evidence type="ECO:0000303" key="6">
    <source>
    </source>
</evidence>
<evidence type="ECO:0000303" key="7">
    <source>
    </source>
</evidence>
<evidence type="ECO:0000303" key="8">
    <source>
    </source>
</evidence>
<evidence type="ECO:0000305" key="9"/>
<evidence type="ECO:0000305" key="10">
    <source>
    </source>
</evidence>
<evidence type="ECO:0000305" key="11">
    <source>
    </source>
</evidence>
<evidence type="ECO:0000305" key="12">
    <source>
    </source>
</evidence>
<evidence type="ECO:0000312" key="13">
    <source>
        <dbReference type="HGNC" id="HGNC:25531"/>
    </source>
</evidence>
<name>FACR2_HUMAN</name>